<proteinExistence type="inferred from homology"/>
<reference key="1">
    <citation type="journal article" date="2013" name="Plant Physiol.">
        <title>A Nostoc punctiforme Sugar Transporter Necessary to Establish a Cyanobacterium-Plant Symbiosis.</title>
        <authorList>
            <person name="Ekman M."/>
            <person name="Picossi S."/>
            <person name="Campbell E.L."/>
            <person name="Meeks J.C."/>
            <person name="Flores E."/>
        </authorList>
    </citation>
    <scope>NUCLEOTIDE SEQUENCE [LARGE SCALE GENOMIC DNA]</scope>
    <source>
        <strain>ATCC 29133 / PCC 73102</strain>
    </source>
</reference>
<protein>
    <recommendedName>
        <fullName evidence="1">Cytochrome b6-f complex subunit 8</fullName>
    </recommendedName>
    <alternativeName>
        <fullName evidence="1">Cytochrome b6-f complex subunit PetN</fullName>
    </alternativeName>
    <alternativeName>
        <fullName evidence="1">Cytochrome b6-f complex subunit VIII</fullName>
    </alternativeName>
</protein>
<keyword id="KW-0249">Electron transport</keyword>
<keyword id="KW-0472">Membrane</keyword>
<keyword id="KW-0602">Photosynthesis</keyword>
<keyword id="KW-1185">Reference proteome</keyword>
<keyword id="KW-0793">Thylakoid</keyword>
<keyword id="KW-0812">Transmembrane</keyword>
<keyword id="KW-1133">Transmembrane helix</keyword>
<keyword id="KW-0813">Transport</keyword>
<accession>B2J0R7</accession>
<dbReference type="EMBL" id="CP001037">
    <property type="protein sequence ID" value="ACC80284.1"/>
    <property type="molecule type" value="Genomic_DNA"/>
</dbReference>
<dbReference type="RefSeq" id="WP_012408302.1">
    <property type="nucleotide sequence ID" value="NC_010628.1"/>
</dbReference>
<dbReference type="SMR" id="B2J0R7"/>
<dbReference type="STRING" id="63737.Npun_R1599"/>
<dbReference type="EnsemblBacteria" id="ACC80284">
    <property type="protein sequence ID" value="ACC80284"/>
    <property type="gene ID" value="Npun_R1599"/>
</dbReference>
<dbReference type="GeneID" id="57097106"/>
<dbReference type="KEGG" id="npu:Npun_R1599"/>
<dbReference type="eggNOG" id="ENOG50329XJ">
    <property type="taxonomic scope" value="Bacteria"/>
</dbReference>
<dbReference type="HOGENOM" id="CLU_215774_1_0_3"/>
<dbReference type="PhylomeDB" id="B2J0R7"/>
<dbReference type="Proteomes" id="UP000001191">
    <property type="component" value="Chromosome"/>
</dbReference>
<dbReference type="GO" id="GO:0009512">
    <property type="term" value="C:cytochrome b6f complex"/>
    <property type="evidence" value="ECO:0007669"/>
    <property type="project" value="InterPro"/>
</dbReference>
<dbReference type="GO" id="GO:0031676">
    <property type="term" value="C:plasma membrane-derived thylakoid membrane"/>
    <property type="evidence" value="ECO:0007669"/>
    <property type="project" value="UniProtKB-SubCell"/>
</dbReference>
<dbReference type="GO" id="GO:0045158">
    <property type="term" value="F:electron transporter, transferring electrons within cytochrome b6/f complex of photosystem II activity"/>
    <property type="evidence" value="ECO:0007669"/>
    <property type="project" value="InterPro"/>
</dbReference>
<dbReference type="GO" id="GO:0017004">
    <property type="term" value="P:cytochrome complex assembly"/>
    <property type="evidence" value="ECO:0007669"/>
    <property type="project" value="UniProtKB-UniRule"/>
</dbReference>
<dbReference type="GO" id="GO:0015979">
    <property type="term" value="P:photosynthesis"/>
    <property type="evidence" value="ECO:0007669"/>
    <property type="project" value="UniProtKB-KW"/>
</dbReference>
<dbReference type="HAMAP" id="MF_00395">
    <property type="entry name" value="Cytb6_f_PetN"/>
    <property type="match status" value="1"/>
</dbReference>
<dbReference type="InterPro" id="IPR036143">
    <property type="entry name" value="Cytochr_b6-f_cplx_su8_sf"/>
</dbReference>
<dbReference type="InterPro" id="IPR005497">
    <property type="entry name" value="Cytochrome_b6-f_cplx_su8"/>
</dbReference>
<dbReference type="NCBIfam" id="NF011331">
    <property type="entry name" value="PRK14747.1"/>
    <property type="match status" value="1"/>
</dbReference>
<dbReference type="Pfam" id="PF03742">
    <property type="entry name" value="PetN"/>
    <property type="match status" value="1"/>
</dbReference>
<dbReference type="SUPFAM" id="SSF103451">
    <property type="entry name" value="PetN subunit of the cytochrome b6f complex"/>
    <property type="match status" value="1"/>
</dbReference>
<gene>
    <name evidence="1" type="primary">petN</name>
    <name type="ordered locus">Npun_R1599</name>
</gene>
<name>PETN_NOSP7</name>
<organism>
    <name type="scientific">Nostoc punctiforme (strain ATCC 29133 / PCC 73102)</name>
    <dbReference type="NCBI Taxonomy" id="63737"/>
    <lineage>
        <taxon>Bacteria</taxon>
        <taxon>Bacillati</taxon>
        <taxon>Cyanobacteriota</taxon>
        <taxon>Cyanophyceae</taxon>
        <taxon>Nostocales</taxon>
        <taxon>Nostocaceae</taxon>
        <taxon>Nostoc</taxon>
    </lineage>
</organism>
<sequence length="29" mass="3292">MEILTLGWVSLLVVFTWSIAMVVWGRNGL</sequence>
<comment type="function">
    <text evidence="1">Component of the cytochrome b6-f complex, which mediates electron transfer between photosystem II (PSII) and photosystem I (PSI), cyclic electron flow around PSI, and state transitions.</text>
</comment>
<comment type="subunit">
    <text evidence="1">The 4 large subunits of the cytochrome b6-f complex are cytochrome b6, subunit IV (17 kDa polypeptide, PetD), cytochrome f and the Rieske protein, while the 4 small subunits are PetG, PetL, PetM and PetN. The complex functions as a dimer.</text>
</comment>
<comment type="subcellular location">
    <subcellularLocation>
        <location evidence="1">Cellular thylakoid membrane</location>
        <topology evidence="1">Single-pass membrane protein</topology>
    </subcellularLocation>
</comment>
<comment type="similarity">
    <text evidence="1">Belongs to the PetN family.</text>
</comment>
<evidence type="ECO:0000255" key="1">
    <source>
        <dbReference type="HAMAP-Rule" id="MF_00395"/>
    </source>
</evidence>
<feature type="chain" id="PRO_1000192358" description="Cytochrome b6-f complex subunit 8">
    <location>
        <begin position="1"/>
        <end position="29"/>
    </location>
</feature>
<feature type="transmembrane region" description="Helical" evidence="1">
    <location>
        <begin position="3"/>
        <end position="23"/>
    </location>
</feature>